<proteinExistence type="inferred from homology"/>
<sequence>MPSMELSVISPCSSANLGPGYDVLAIAFDAFYDQVNVMLSDKLRILADEIPVQPDKNTAGLTALKMIEDFGIKDGIKISIKKGIPYGLGLGSSGSSAAAAAYAINNLFALGLERKDLIKYAAVGELASSGSPHPDNVSASILGGLVIVSPEGISAKRIEVSDQFKFLLVIADLKIRDKTKYARSLVPSGVSMGDHKRNTSRVASLIAGLMSGDRELVSTGMNDDIVEAAREPIFPYYRRVKDTAIESGAVGAVVSGAGPSILVVYDNKTETKQMIRKISRIYEGMGISVNFATPNVADGVREVANPLAD</sequence>
<dbReference type="EC" id="2.7.1.39" evidence="1"/>
<dbReference type="EMBL" id="BA000011">
    <property type="protein sequence ID" value="BAB60177.1"/>
    <property type="molecule type" value="Genomic_DNA"/>
</dbReference>
<dbReference type="SMR" id="Q979X5"/>
<dbReference type="STRING" id="273116.gene:9381828"/>
<dbReference type="PaxDb" id="273116-14325273"/>
<dbReference type="KEGG" id="tvo:TVG1060320"/>
<dbReference type="eggNOG" id="arCOG01027">
    <property type="taxonomic scope" value="Archaea"/>
</dbReference>
<dbReference type="HOGENOM" id="CLU_041243_1_1_2"/>
<dbReference type="PhylomeDB" id="Q979X5"/>
<dbReference type="UniPathway" id="UPA00050">
    <property type="reaction ID" value="UER00064"/>
</dbReference>
<dbReference type="Proteomes" id="UP000001017">
    <property type="component" value="Chromosome"/>
</dbReference>
<dbReference type="GO" id="GO:0005737">
    <property type="term" value="C:cytoplasm"/>
    <property type="evidence" value="ECO:0007669"/>
    <property type="project" value="UniProtKB-SubCell"/>
</dbReference>
<dbReference type="GO" id="GO:0005524">
    <property type="term" value="F:ATP binding"/>
    <property type="evidence" value="ECO:0007669"/>
    <property type="project" value="UniProtKB-UniRule"/>
</dbReference>
<dbReference type="GO" id="GO:0004413">
    <property type="term" value="F:homoserine kinase activity"/>
    <property type="evidence" value="ECO:0007669"/>
    <property type="project" value="UniProtKB-UniRule"/>
</dbReference>
<dbReference type="GO" id="GO:0009088">
    <property type="term" value="P:threonine biosynthetic process"/>
    <property type="evidence" value="ECO:0007669"/>
    <property type="project" value="UniProtKB-UniRule"/>
</dbReference>
<dbReference type="Gene3D" id="3.30.230.10">
    <property type="match status" value="1"/>
</dbReference>
<dbReference type="Gene3D" id="3.30.70.890">
    <property type="entry name" value="GHMP kinase, C-terminal domain"/>
    <property type="match status" value="1"/>
</dbReference>
<dbReference type="HAMAP" id="MF_00384">
    <property type="entry name" value="Homoser_kinase"/>
    <property type="match status" value="1"/>
</dbReference>
<dbReference type="InterPro" id="IPR013750">
    <property type="entry name" value="GHMP_kinase_C_dom"/>
</dbReference>
<dbReference type="InterPro" id="IPR036554">
    <property type="entry name" value="GHMP_kinase_C_sf"/>
</dbReference>
<dbReference type="InterPro" id="IPR006204">
    <property type="entry name" value="GHMP_kinase_N_dom"/>
</dbReference>
<dbReference type="InterPro" id="IPR006203">
    <property type="entry name" value="GHMP_knse_ATP-bd_CS"/>
</dbReference>
<dbReference type="InterPro" id="IPR000870">
    <property type="entry name" value="Homoserine_kinase"/>
</dbReference>
<dbReference type="InterPro" id="IPR020568">
    <property type="entry name" value="Ribosomal_Su5_D2-typ_SF"/>
</dbReference>
<dbReference type="InterPro" id="IPR014721">
    <property type="entry name" value="Ribsml_uS5_D2-typ_fold_subgr"/>
</dbReference>
<dbReference type="NCBIfam" id="NF002288">
    <property type="entry name" value="PRK01212.1-4"/>
    <property type="match status" value="1"/>
</dbReference>
<dbReference type="NCBIfam" id="TIGR00191">
    <property type="entry name" value="thrB"/>
    <property type="match status" value="1"/>
</dbReference>
<dbReference type="PANTHER" id="PTHR20861:SF1">
    <property type="entry name" value="HOMOSERINE KINASE"/>
    <property type="match status" value="1"/>
</dbReference>
<dbReference type="PANTHER" id="PTHR20861">
    <property type="entry name" value="HOMOSERINE/4-DIPHOSPHOCYTIDYL-2-C-METHYL-D-ERYTHRITOL KINASE"/>
    <property type="match status" value="1"/>
</dbReference>
<dbReference type="Pfam" id="PF08544">
    <property type="entry name" value="GHMP_kinases_C"/>
    <property type="match status" value="1"/>
</dbReference>
<dbReference type="Pfam" id="PF00288">
    <property type="entry name" value="GHMP_kinases_N"/>
    <property type="match status" value="1"/>
</dbReference>
<dbReference type="PIRSF" id="PIRSF000676">
    <property type="entry name" value="Homoser_kin"/>
    <property type="match status" value="1"/>
</dbReference>
<dbReference type="PRINTS" id="PR00958">
    <property type="entry name" value="HOMSERKINASE"/>
</dbReference>
<dbReference type="SUPFAM" id="SSF55060">
    <property type="entry name" value="GHMP Kinase, C-terminal domain"/>
    <property type="match status" value="1"/>
</dbReference>
<dbReference type="SUPFAM" id="SSF54211">
    <property type="entry name" value="Ribosomal protein S5 domain 2-like"/>
    <property type="match status" value="1"/>
</dbReference>
<dbReference type="PROSITE" id="PS00627">
    <property type="entry name" value="GHMP_KINASES_ATP"/>
    <property type="match status" value="1"/>
</dbReference>
<reference key="1">
    <citation type="journal article" date="2000" name="Proc. Natl. Acad. Sci. U.S.A.">
        <title>Archaeal adaptation to higher temperatures revealed by genomic sequence of Thermoplasma volcanium.</title>
        <authorList>
            <person name="Kawashima T."/>
            <person name="Amano N."/>
            <person name="Koike H."/>
            <person name="Makino S."/>
            <person name="Higuchi S."/>
            <person name="Kawashima-Ohya Y."/>
            <person name="Watanabe K."/>
            <person name="Yamazaki M."/>
            <person name="Kanehori K."/>
            <person name="Kawamoto T."/>
            <person name="Nunoshiba T."/>
            <person name="Yamamoto Y."/>
            <person name="Aramaki H."/>
            <person name="Makino K."/>
            <person name="Suzuki M."/>
        </authorList>
    </citation>
    <scope>NUCLEOTIDE SEQUENCE [LARGE SCALE GENOMIC DNA]</scope>
    <source>
        <strain>ATCC 51530 / DSM 4299 / JCM 9571 / NBRC 15438 / GSS1</strain>
    </source>
</reference>
<evidence type="ECO:0000255" key="1">
    <source>
        <dbReference type="HAMAP-Rule" id="MF_00384"/>
    </source>
</evidence>
<feature type="chain" id="PRO_0000156653" description="Homoserine kinase">
    <location>
        <begin position="1"/>
        <end position="309"/>
    </location>
</feature>
<feature type="binding site" evidence="1">
    <location>
        <begin position="85"/>
        <end position="95"/>
    </location>
    <ligand>
        <name>ATP</name>
        <dbReference type="ChEBI" id="CHEBI:30616"/>
    </ligand>
</feature>
<name>KHSE_THEVO</name>
<organism>
    <name type="scientific">Thermoplasma volcanium (strain ATCC 51530 / DSM 4299 / JCM 9571 / NBRC 15438 / GSS1)</name>
    <dbReference type="NCBI Taxonomy" id="273116"/>
    <lineage>
        <taxon>Archaea</taxon>
        <taxon>Methanobacteriati</taxon>
        <taxon>Thermoplasmatota</taxon>
        <taxon>Thermoplasmata</taxon>
        <taxon>Thermoplasmatales</taxon>
        <taxon>Thermoplasmataceae</taxon>
        <taxon>Thermoplasma</taxon>
    </lineage>
</organism>
<gene>
    <name evidence="1" type="primary">thrB</name>
    <name type="ordered locus">TV1035</name>
    <name type="ORF">TVG1060320</name>
</gene>
<protein>
    <recommendedName>
        <fullName evidence="1">Homoserine kinase</fullName>
        <shortName evidence="1">HK</shortName>
        <shortName evidence="1">HSK</shortName>
        <ecNumber evidence="1">2.7.1.39</ecNumber>
    </recommendedName>
</protein>
<comment type="function">
    <text evidence="1">Catalyzes the ATP-dependent phosphorylation of L-homoserine to L-homoserine phosphate.</text>
</comment>
<comment type="catalytic activity">
    <reaction evidence="1">
        <text>L-homoserine + ATP = O-phospho-L-homoserine + ADP + H(+)</text>
        <dbReference type="Rhea" id="RHEA:13985"/>
        <dbReference type="ChEBI" id="CHEBI:15378"/>
        <dbReference type="ChEBI" id="CHEBI:30616"/>
        <dbReference type="ChEBI" id="CHEBI:57476"/>
        <dbReference type="ChEBI" id="CHEBI:57590"/>
        <dbReference type="ChEBI" id="CHEBI:456216"/>
        <dbReference type="EC" id="2.7.1.39"/>
    </reaction>
</comment>
<comment type="pathway">
    <text evidence="1">Amino-acid biosynthesis; L-threonine biosynthesis; L-threonine from L-aspartate: step 4/5.</text>
</comment>
<comment type="subcellular location">
    <subcellularLocation>
        <location evidence="1">Cytoplasm</location>
    </subcellularLocation>
</comment>
<comment type="similarity">
    <text evidence="1">Belongs to the GHMP kinase family. Homoserine kinase subfamily.</text>
</comment>
<accession>Q979X5</accession>
<keyword id="KW-0028">Amino-acid biosynthesis</keyword>
<keyword id="KW-0067">ATP-binding</keyword>
<keyword id="KW-0963">Cytoplasm</keyword>
<keyword id="KW-0418">Kinase</keyword>
<keyword id="KW-0547">Nucleotide-binding</keyword>
<keyword id="KW-0791">Threonine biosynthesis</keyword>
<keyword id="KW-0808">Transferase</keyword>